<reference key="1">
    <citation type="journal article" date="2004" name="Nat. Genet.">
        <title>Complete sequencing and characterization of 21,243 full-length human cDNAs.</title>
        <authorList>
            <person name="Ota T."/>
            <person name="Suzuki Y."/>
            <person name="Nishikawa T."/>
            <person name="Otsuki T."/>
            <person name="Sugiyama T."/>
            <person name="Irie R."/>
            <person name="Wakamatsu A."/>
            <person name="Hayashi K."/>
            <person name="Sato H."/>
            <person name="Nagai K."/>
            <person name="Kimura K."/>
            <person name="Makita H."/>
            <person name="Sekine M."/>
            <person name="Obayashi M."/>
            <person name="Nishi T."/>
            <person name="Shibahara T."/>
            <person name="Tanaka T."/>
            <person name="Ishii S."/>
            <person name="Yamamoto J."/>
            <person name="Saito K."/>
            <person name="Kawai Y."/>
            <person name="Isono Y."/>
            <person name="Nakamura Y."/>
            <person name="Nagahari K."/>
            <person name="Murakami K."/>
            <person name="Yasuda T."/>
            <person name="Iwayanagi T."/>
            <person name="Wagatsuma M."/>
            <person name="Shiratori A."/>
            <person name="Sudo H."/>
            <person name="Hosoiri T."/>
            <person name="Kaku Y."/>
            <person name="Kodaira H."/>
            <person name="Kondo H."/>
            <person name="Sugawara M."/>
            <person name="Takahashi M."/>
            <person name="Kanda K."/>
            <person name="Yokoi T."/>
            <person name="Furuya T."/>
            <person name="Kikkawa E."/>
            <person name="Omura Y."/>
            <person name="Abe K."/>
            <person name="Kamihara K."/>
            <person name="Katsuta N."/>
            <person name="Sato K."/>
            <person name="Tanikawa M."/>
            <person name="Yamazaki M."/>
            <person name="Ninomiya K."/>
            <person name="Ishibashi T."/>
            <person name="Yamashita H."/>
            <person name="Murakawa K."/>
            <person name="Fujimori K."/>
            <person name="Tanai H."/>
            <person name="Kimata M."/>
            <person name="Watanabe M."/>
            <person name="Hiraoka S."/>
            <person name="Chiba Y."/>
            <person name="Ishida S."/>
            <person name="Ono Y."/>
            <person name="Takiguchi S."/>
            <person name="Watanabe S."/>
            <person name="Yosida M."/>
            <person name="Hotuta T."/>
            <person name="Kusano J."/>
            <person name="Kanehori K."/>
            <person name="Takahashi-Fujii A."/>
            <person name="Hara H."/>
            <person name="Tanase T.-O."/>
            <person name="Nomura Y."/>
            <person name="Togiya S."/>
            <person name="Komai F."/>
            <person name="Hara R."/>
            <person name="Takeuchi K."/>
            <person name="Arita M."/>
            <person name="Imose N."/>
            <person name="Musashino K."/>
            <person name="Yuuki H."/>
            <person name="Oshima A."/>
            <person name="Sasaki N."/>
            <person name="Aotsuka S."/>
            <person name="Yoshikawa Y."/>
            <person name="Matsunawa H."/>
            <person name="Ichihara T."/>
            <person name="Shiohata N."/>
            <person name="Sano S."/>
            <person name="Moriya S."/>
            <person name="Momiyama H."/>
            <person name="Satoh N."/>
            <person name="Takami S."/>
            <person name="Terashima Y."/>
            <person name="Suzuki O."/>
            <person name="Nakagawa S."/>
            <person name="Senoh A."/>
            <person name="Mizoguchi H."/>
            <person name="Goto Y."/>
            <person name="Shimizu F."/>
            <person name="Wakebe H."/>
            <person name="Hishigaki H."/>
            <person name="Watanabe T."/>
            <person name="Sugiyama A."/>
            <person name="Takemoto M."/>
            <person name="Kawakami B."/>
            <person name="Yamazaki M."/>
            <person name="Watanabe K."/>
            <person name="Kumagai A."/>
            <person name="Itakura S."/>
            <person name="Fukuzumi Y."/>
            <person name="Fujimori Y."/>
            <person name="Komiyama M."/>
            <person name="Tashiro H."/>
            <person name="Tanigami A."/>
            <person name="Fujiwara T."/>
            <person name="Ono T."/>
            <person name="Yamada K."/>
            <person name="Fujii Y."/>
            <person name="Ozaki K."/>
            <person name="Hirao M."/>
            <person name="Ohmori Y."/>
            <person name="Kawabata A."/>
            <person name="Hikiji T."/>
            <person name="Kobatake N."/>
            <person name="Inagaki H."/>
            <person name="Ikema Y."/>
            <person name="Okamoto S."/>
            <person name="Okitani R."/>
            <person name="Kawakami T."/>
            <person name="Noguchi S."/>
            <person name="Itoh T."/>
            <person name="Shigeta K."/>
            <person name="Senba T."/>
            <person name="Matsumura K."/>
            <person name="Nakajima Y."/>
            <person name="Mizuno T."/>
            <person name="Morinaga M."/>
            <person name="Sasaki M."/>
            <person name="Togashi T."/>
            <person name="Oyama M."/>
            <person name="Hata H."/>
            <person name="Watanabe M."/>
            <person name="Komatsu T."/>
            <person name="Mizushima-Sugano J."/>
            <person name="Satoh T."/>
            <person name="Shirai Y."/>
            <person name="Takahashi Y."/>
            <person name="Nakagawa K."/>
            <person name="Okumura K."/>
            <person name="Nagase T."/>
            <person name="Nomura N."/>
            <person name="Kikuchi H."/>
            <person name="Masuho Y."/>
            <person name="Yamashita R."/>
            <person name="Nakai K."/>
            <person name="Yada T."/>
            <person name="Nakamura Y."/>
            <person name="Ohara O."/>
            <person name="Isogai T."/>
            <person name="Sugano S."/>
        </authorList>
    </citation>
    <scope>NUCLEOTIDE SEQUENCE [LARGE SCALE MRNA] (ISOFORM 2)</scope>
</reference>
<reference key="2">
    <citation type="journal article" date="2005" name="Nature">
        <title>Generation and annotation of the DNA sequences of human chromosomes 2 and 4.</title>
        <authorList>
            <person name="Hillier L.W."/>
            <person name="Graves T.A."/>
            <person name="Fulton R.S."/>
            <person name="Fulton L.A."/>
            <person name="Pepin K.H."/>
            <person name="Minx P."/>
            <person name="Wagner-McPherson C."/>
            <person name="Layman D."/>
            <person name="Wylie K."/>
            <person name="Sekhon M."/>
            <person name="Becker M.C."/>
            <person name="Fewell G.A."/>
            <person name="Delehaunty K.D."/>
            <person name="Miner T.L."/>
            <person name="Nash W.E."/>
            <person name="Kremitzki C."/>
            <person name="Oddy L."/>
            <person name="Du H."/>
            <person name="Sun H."/>
            <person name="Bradshaw-Cordum H."/>
            <person name="Ali J."/>
            <person name="Carter J."/>
            <person name="Cordes M."/>
            <person name="Harris A."/>
            <person name="Isak A."/>
            <person name="van Brunt A."/>
            <person name="Nguyen C."/>
            <person name="Du F."/>
            <person name="Courtney L."/>
            <person name="Kalicki J."/>
            <person name="Ozersky P."/>
            <person name="Abbott S."/>
            <person name="Armstrong J."/>
            <person name="Belter E.A."/>
            <person name="Caruso L."/>
            <person name="Cedroni M."/>
            <person name="Cotton M."/>
            <person name="Davidson T."/>
            <person name="Desai A."/>
            <person name="Elliott G."/>
            <person name="Erb T."/>
            <person name="Fronick C."/>
            <person name="Gaige T."/>
            <person name="Haakenson W."/>
            <person name="Haglund K."/>
            <person name="Holmes A."/>
            <person name="Harkins R."/>
            <person name="Kim K."/>
            <person name="Kruchowski S.S."/>
            <person name="Strong C.M."/>
            <person name="Grewal N."/>
            <person name="Goyea E."/>
            <person name="Hou S."/>
            <person name="Levy A."/>
            <person name="Martinka S."/>
            <person name="Mead K."/>
            <person name="McLellan M.D."/>
            <person name="Meyer R."/>
            <person name="Randall-Maher J."/>
            <person name="Tomlinson C."/>
            <person name="Dauphin-Kohlberg S."/>
            <person name="Kozlowicz-Reilly A."/>
            <person name="Shah N."/>
            <person name="Swearengen-Shahid S."/>
            <person name="Snider J."/>
            <person name="Strong J.T."/>
            <person name="Thompson J."/>
            <person name="Yoakum M."/>
            <person name="Leonard S."/>
            <person name="Pearman C."/>
            <person name="Trani L."/>
            <person name="Radionenko M."/>
            <person name="Waligorski J.E."/>
            <person name="Wang C."/>
            <person name="Rock S.M."/>
            <person name="Tin-Wollam A.-M."/>
            <person name="Maupin R."/>
            <person name="Latreille P."/>
            <person name="Wendl M.C."/>
            <person name="Yang S.-P."/>
            <person name="Pohl C."/>
            <person name="Wallis J.W."/>
            <person name="Spieth J."/>
            <person name="Bieri T.A."/>
            <person name="Berkowicz N."/>
            <person name="Nelson J.O."/>
            <person name="Osborne J."/>
            <person name="Ding L."/>
            <person name="Meyer R."/>
            <person name="Sabo A."/>
            <person name="Shotland Y."/>
            <person name="Sinha P."/>
            <person name="Wohldmann P.E."/>
            <person name="Cook L.L."/>
            <person name="Hickenbotham M.T."/>
            <person name="Eldred J."/>
            <person name="Williams D."/>
            <person name="Jones T.A."/>
            <person name="She X."/>
            <person name="Ciccarelli F.D."/>
            <person name="Izaurralde E."/>
            <person name="Taylor J."/>
            <person name="Schmutz J."/>
            <person name="Myers R.M."/>
            <person name="Cox D.R."/>
            <person name="Huang X."/>
            <person name="McPherson J.D."/>
            <person name="Mardis E.R."/>
            <person name="Clifton S.W."/>
            <person name="Warren W.C."/>
            <person name="Chinwalla A.T."/>
            <person name="Eddy S.R."/>
            <person name="Marra M.A."/>
            <person name="Ovcharenko I."/>
            <person name="Furey T.S."/>
            <person name="Miller W."/>
            <person name="Eichler E.E."/>
            <person name="Bork P."/>
            <person name="Suyama M."/>
            <person name="Torrents D."/>
            <person name="Waterston R.H."/>
            <person name="Wilson R.K."/>
        </authorList>
    </citation>
    <scope>NUCLEOTIDE SEQUENCE [LARGE SCALE GENOMIC DNA]</scope>
</reference>
<reference key="3">
    <citation type="journal article" date="2004" name="Genome Res.">
        <title>The status, quality, and expansion of the NIH full-length cDNA project: the Mammalian Gene Collection (MGC).</title>
        <authorList>
            <consortium name="The MGC Project Team"/>
        </authorList>
    </citation>
    <scope>NUCLEOTIDE SEQUENCE [LARGE SCALE MRNA] (ISOFORMS 1 AND 2)</scope>
    <source>
        <tissue>Skin</tissue>
    </source>
</reference>
<reference key="4">
    <citation type="journal article" date="2001" name="DNA Res.">
        <title>Prediction of the coding sequences of unidentified human genes. XXII. The complete sequences of 50 new cDNA clones which code for large proteins.</title>
        <authorList>
            <person name="Nagase T."/>
            <person name="Kikuno R."/>
            <person name="Ohara O."/>
        </authorList>
    </citation>
    <scope>NUCLEOTIDE SEQUENCE [LARGE SCALE MRNA] OF 248-727 (ISOFORM 1)</scope>
    <source>
        <tissue>Brain</tissue>
    </source>
</reference>
<reference key="5">
    <citation type="journal article" date="2003" name="Eur. J. Biochem.">
        <title>Emerin interacts in vitro with the splicing-associated factor, YT521-B.</title>
        <authorList>
            <person name="Wilkinson F.L."/>
            <person name="Holaska J.M."/>
            <person name="Zhang Z."/>
            <person name="Sharma A."/>
            <person name="Manilal S."/>
            <person name="Holt I."/>
            <person name="Stamm S."/>
            <person name="Wilson K.L."/>
            <person name="Morris G.E."/>
        </authorList>
    </citation>
    <scope>INTERACTION WITH EMD</scope>
</reference>
<reference key="6">
    <citation type="journal article" date="2006" name="Cell">
        <title>Global, in vivo, and site-specific phosphorylation dynamics in signaling networks.</title>
        <authorList>
            <person name="Olsen J.V."/>
            <person name="Blagoev B."/>
            <person name="Gnad F."/>
            <person name="Macek B."/>
            <person name="Kumar C."/>
            <person name="Mortensen P."/>
            <person name="Mann M."/>
        </authorList>
    </citation>
    <scope>PHOSPHORYLATION [LARGE SCALE ANALYSIS] AT SER-308</scope>
    <scope>IDENTIFICATION BY MASS SPECTROMETRY [LARGE SCALE ANALYSIS]</scope>
    <source>
        <tissue>Cervix carcinoma</tissue>
    </source>
</reference>
<reference key="7">
    <citation type="journal article" date="2008" name="Mol. Cell">
        <title>Kinase-selective enrichment enables quantitative phosphoproteomics of the kinome across the cell cycle.</title>
        <authorList>
            <person name="Daub H."/>
            <person name="Olsen J.V."/>
            <person name="Bairlein M."/>
            <person name="Gnad F."/>
            <person name="Oppermann F.S."/>
            <person name="Korner R."/>
            <person name="Greff Z."/>
            <person name="Keri G."/>
            <person name="Stemmann O."/>
            <person name="Mann M."/>
        </authorList>
    </citation>
    <scope>PHOSPHORYLATION [LARGE SCALE ANALYSIS] AT SER-308</scope>
    <scope>IDENTIFICATION BY MASS SPECTROMETRY [LARGE SCALE ANALYSIS]</scope>
    <source>
        <tissue>Cervix carcinoma</tissue>
    </source>
</reference>
<reference key="8">
    <citation type="journal article" date="2008" name="Proc. Natl. Acad. Sci. U.S.A.">
        <title>A quantitative atlas of mitotic phosphorylation.</title>
        <authorList>
            <person name="Dephoure N."/>
            <person name="Zhou C."/>
            <person name="Villen J."/>
            <person name="Beausoleil S.A."/>
            <person name="Bakalarski C.E."/>
            <person name="Elledge S.J."/>
            <person name="Gygi S.P."/>
        </authorList>
    </citation>
    <scope>PHOSPHORYLATION [LARGE SCALE ANALYSIS] AT SER-308; SER-315; SER-317; SER-318; SER-320 AND SER-424</scope>
    <scope>IDENTIFICATION BY MASS SPECTROMETRY [LARGE SCALE ANALYSIS]</scope>
    <source>
        <tissue>Cervix carcinoma</tissue>
    </source>
</reference>
<reference key="9">
    <citation type="journal article" date="2009" name="Anal. Chem.">
        <title>Lys-N and trypsin cover complementary parts of the phosphoproteome in a refined SCX-based approach.</title>
        <authorList>
            <person name="Gauci S."/>
            <person name="Helbig A.O."/>
            <person name="Slijper M."/>
            <person name="Krijgsveld J."/>
            <person name="Heck A.J."/>
            <person name="Mohammed S."/>
        </authorList>
    </citation>
    <scope>IDENTIFICATION BY MASS SPECTROMETRY [LARGE SCALE ANALYSIS]</scope>
</reference>
<reference key="10">
    <citation type="journal article" date="2009" name="J. Biol. Chem.">
        <title>Heterogeneous nuclear ribonucleoprotein G regulates splice site selection by binding to CC(A/C)-rich regions in pre-mRNA.</title>
        <authorList>
            <person name="Heinrich B."/>
            <person name="Zhang Z."/>
            <person name="Raitskin O."/>
            <person name="Hiller M."/>
            <person name="Benderska N."/>
            <person name="Hartmann A.M."/>
            <person name="Bracco L."/>
            <person name="Elliott D."/>
            <person name="Ben-Ari S."/>
            <person name="Soreq H."/>
            <person name="Sperling J."/>
            <person name="Sperling R."/>
            <person name="Stamm S."/>
        </authorList>
    </citation>
    <scope>INTERACTION WITH RBMX</scope>
</reference>
<reference key="11">
    <citation type="journal article" date="2010" name="Sci. Signal.">
        <title>Quantitative phosphoproteomics reveals widespread full phosphorylation site occupancy during mitosis.</title>
        <authorList>
            <person name="Olsen J.V."/>
            <person name="Vermeulen M."/>
            <person name="Santamaria A."/>
            <person name="Kumar C."/>
            <person name="Miller M.L."/>
            <person name="Jensen L.J."/>
            <person name="Gnad F."/>
            <person name="Cox J."/>
            <person name="Jensen T.S."/>
            <person name="Nigg E.A."/>
            <person name="Brunak S."/>
            <person name="Mann M."/>
        </authorList>
    </citation>
    <scope>PHOSPHORYLATION [LARGE SCALE ANALYSIS] AT SER-146; THR-148; SER-308; SER-424 AND SER-435</scope>
    <scope>IDENTIFICATION BY MASS SPECTROMETRY [LARGE SCALE ANALYSIS]</scope>
    <source>
        <tissue>Cervix carcinoma</tissue>
    </source>
</reference>
<reference key="12">
    <citation type="journal article" date="2011" name="Sci. Signal.">
        <title>System-wide temporal characterization of the proteome and phosphoproteome of human embryonic stem cell differentiation.</title>
        <authorList>
            <person name="Rigbolt K.T."/>
            <person name="Prokhorova T.A."/>
            <person name="Akimov V."/>
            <person name="Henningsen J."/>
            <person name="Johansen P.T."/>
            <person name="Kratchmarova I."/>
            <person name="Kassem M."/>
            <person name="Mann M."/>
            <person name="Olsen J.V."/>
            <person name="Blagoev B."/>
        </authorList>
    </citation>
    <scope>PHOSPHORYLATION [LARGE SCALE ANALYSIS] AT SER-308</scope>
    <scope>IDENTIFICATION BY MASS SPECTROMETRY [LARGE SCALE ANALYSIS]</scope>
</reference>
<reference key="13">
    <citation type="journal article" date="2013" name="J. Proteome Res.">
        <title>Toward a comprehensive characterization of a human cancer cell phosphoproteome.</title>
        <authorList>
            <person name="Zhou H."/>
            <person name="Di Palma S."/>
            <person name="Preisinger C."/>
            <person name="Peng M."/>
            <person name="Polat A.N."/>
            <person name="Heck A.J."/>
            <person name="Mohammed S."/>
        </authorList>
    </citation>
    <scope>PHOSPHORYLATION [LARGE SCALE ANALYSIS] AT SER-118; SER-120; SER-308; SER-424 AND SER-545</scope>
    <scope>IDENTIFICATION BY MASS SPECTROMETRY [LARGE SCALE ANALYSIS]</scope>
    <source>
        <tissue>Cervix carcinoma</tissue>
        <tissue>Erythroleukemia</tissue>
    </source>
</reference>
<reference key="14">
    <citation type="journal article" date="2014" name="J. Proteomics">
        <title>An enzyme assisted RP-RPLC approach for in-depth analysis of human liver phosphoproteome.</title>
        <authorList>
            <person name="Bian Y."/>
            <person name="Song C."/>
            <person name="Cheng K."/>
            <person name="Dong M."/>
            <person name="Wang F."/>
            <person name="Huang J."/>
            <person name="Sun D."/>
            <person name="Wang L."/>
            <person name="Ye M."/>
            <person name="Zou H."/>
        </authorList>
    </citation>
    <scope>PHOSPHORYLATION [LARGE SCALE ANALYSIS] AT SER-146; THR-148 AND SER-308</scope>
    <scope>IDENTIFICATION BY MASS SPECTROMETRY [LARGE SCALE ANALYSIS]</scope>
    <source>
        <tissue>Liver</tissue>
    </source>
</reference>
<reference key="15">
    <citation type="journal article" date="2014" name="Nat. Struct. Mol. Biol.">
        <title>Uncovering global SUMOylation signaling networks in a site-specific manner.</title>
        <authorList>
            <person name="Hendriks I.A."/>
            <person name="D'Souza R.C."/>
            <person name="Yang B."/>
            <person name="Verlaan-de Vries M."/>
            <person name="Mann M."/>
            <person name="Vertegaal A.C."/>
        </authorList>
    </citation>
    <scope>SUMOYLATION [LARGE SCALE ANALYSIS] AT LYS-96</scope>
    <scope>IDENTIFICATION BY MASS SPECTROMETRY [LARGE SCALE ANALYSIS]</scope>
</reference>
<reference key="16">
    <citation type="journal article" date="2015" name="J. Biol. Chem.">
        <title>structural basis for the discriminative recognition of N6-methyladenosine RNA by the human YT521-B homology domain family of proteins.</title>
        <authorList>
            <person name="Xu C."/>
            <person name="Liu K."/>
            <person name="Ahmed H."/>
            <person name="Loppnau P."/>
            <person name="Schapira M."/>
            <person name="Min J."/>
        </authorList>
    </citation>
    <scope>FUNCTION</scope>
    <scope>RNA-BINDING</scope>
    <scope>MUTAGENESIS OF ASN-367; LEU-380 AND MET-438</scope>
</reference>
<reference key="17">
    <citation type="journal article" date="2016" name="Mol. Cell">
        <title>Nuclear m(6)A reader YTHDC1 regulates mRNA splicing.</title>
        <authorList>
            <person name="Xiao W."/>
            <person name="Adhikari S."/>
            <person name="Dahal U."/>
            <person name="Chen Y.S."/>
            <person name="Hao Y.J."/>
            <person name="Sun B.F."/>
            <person name="Sun H.Y."/>
            <person name="Li A."/>
            <person name="Ping X.L."/>
            <person name="Lai W.Y."/>
            <person name="Wang X."/>
            <person name="Ma H.L."/>
            <person name="Huang C.M."/>
            <person name="Yang Y."/>
            <person name="Huang N."/>
            <person name="Jiang G.B."/>
            <person name="Wang H.L."/>
            <person name="Zhou Q."/>
            <person name="Wang X.J."/>
            <person name="Zhao Y.L."/>
            <person name="Yang Y.G."/>
        </authorList>
    </citation>
    <scope>FUNCTION</scope>
    <scope>SUBCELLULAR LOCATION</scope>
    <scope>INTERACTION WITH SRSF3 AND SRSF10</scope>
    <scope>MUTAGENESIS OF TRP-377 AND TRP-428</scope>
</reference>
<reference key="18">
    <citation type="journal article" date="2016" name="Nature">
        <title>m(6)A RNA methylation promotes XIST-mediated transcriptional repression.</title>
        <authorList>
            <person name="Patil D.P."/>
            <person name="Chen C.K."/>
            <person name="Pickering B.F."/>
            <person name="Chow A."/>
            <person name="Jackson C."/>
            <person name="Guttman M."/>
            <person name="Jaffrey S.R."/>
        </authorList>
    </citation>
    <scope>FUNCTION</scope>
    <scope>RNA-BINDING</scope>
</reference>
<reference key="19">
    <citation type="journal article" date="2017" name="Elife">
        <title>YTHDC1 mediates nuclear export of N6-methyladenosine methylated mRNAs.</title>
        <authorList>
            <person name="Roundtree I.A."/>
            <person name="Luo G.Z."/>
            <person name="Zhang Z."/>
            <person name="Wang X."/>
            <person name="Zhou T."/>
            <person name="Cui Y."/>
            <person name="Sha J."/>
            <person name="Huang X."/>
            <person name="Guerrero L."/>
            <person name="Xie P."/>
            <person name="He E."/>
            <person name="Shen B."/>
            <person name="He C."/>
        </authorList>
    </citation>
    <scope>FUNCTION</scope>
    <scope>INTERACTION WITH SRSF3 AND ZCCHC8</scope>
</reference>
<reference key="20">
    <citation type="journal article" date="2017" name="Nat. Struct. Mol. Biol.">
        <title>Site-specific mapping of the human SUMO proteome reveals co-modification with phosphorylation.</title>
        <authorList>
            <person name="Hendriks I.A."/>
            <person name="Lyon D."/>
            <person name="Young C."/>
            <person name="Jensen L.J."/>
            <person name="Vertegaal A.C."/>
            <person name="Nielsen M.L."/>
        </authorList>
    </citation>
    <scope>SUMOYLATION [LARGE SCALE ANALYSIS] AT LYS-96</scope>
    <scope>IDENTIFICATION BY MASS SPECTROMETRY [LARGE SCALE ANALYSIS]</scope>
</reference>
<reference key="21">
    <citation type="journal article" date="2010" name="J. Biol. Chem.">
        <title>The YTH domain is a novel RNA binding domain.</title>
        <authorList>
            <person name="Zhang Z."/>
            <person name="Theler D."/>
            <person name="Kaminska K.H."/>
            <person name="Hiller M."/>
            <person name="de la Grange P."/>
            <person name="Pudimat R."/>
            <person name="Rafalska I."/>
            <person name="Heinrich B."/>
            <person name="Bujnicki J.M."/>
            <person name="Allain F.H."/>
            <person name="Stamm S."/>
        </authorList>
    </citation>
    <scope>STRUCTURE BY NMR OF 334-509</scope>
    <scope>RNA-BINDING</scope>
    <scope>SUBCELLULAR LOCATION</scope>
    <scope>FUNCTION</scope>
    <scope>MUTAGENESIS OF LYS-361; SER-362; TRP-377; LEU-387; LEU-399; PHE-401; SER-402; PHE-409; GLY-411; TRP-428; TRP-447; ASN-466; ARG-475 AND ASP-476</scope>
</reference>
<reference key="22">
    <citation type="journal article" date="2014" name="Nat. Chem. Biol.">
        <title>Structural basis for selective binding of m6A RNA by the YTHDC1 YTH domain.</title>
        <authorList>
            <person name="Xu C."/>
            <person name="Wang X."/>
            <person name="Liu K."/>
            <person name="Roundtree I.A."/>
            <person name="Tempel W."/>
            <person name="Li Y."/>
            <person name="Lu Z."/>
            <person name="He C."/>
            <person name="Min J."/>
        </authorList>
    </citation>
    <scope>X-RAY CRYSTALLOGRAPHY (1.80 ANGSTROMS) OF 345-509 IN COMPLEX WITH N6-METHYLADENOSINE (M6A)-CONTAINING RNA</scope>
    <scope>FUNCTION</scope>
    <scope>RNA-BINDING</scope>
    <scope>MUTAGENESIS OF TRP-377; TRP-428 AND ARG-475</scope>
</reference>
<reference evidence="21 22 23 24" key="23">
    <citation type="journal article" date="2019" name="J. Chem. Theory Comput.">
        <title>Flexible binding of m6A reader protein YTHDC1 to its preferred RNA motif.</title>
        <authorList>
            <person name="Li Y."/>
            <person name="Bedi R.K."/>
            <person name="Wiedmer L."/>
            <person name="Huang D."/>
            <person name="Sledz P."/>
            <person name="Caflisch A."/>
        </authorList>
    </citation>
    <scope>X-RAY CRYSTALLOGRAPHY (1.46 ANGSTROMS) OF 345-509 IN COMPLEX WITH N6-METHYLADENOSINE (M6A)-CONTAINING RNA</scope>
</reference>
<reference evidence="25 26 27" key="24">
    <citation type="journal article" date="2020" name="Nucleic Acids Res.">
        <title>Biochemical and structural basis for YTH domain of human YTHDC1 binding to methylated adenine in DNA.</title>
        <authorList>
            <person name="Woodcock C.B."/>
            <person name="Horton J.R."/>
            <person name="Zhou J."/>
            <person name="Bedford M.T."/>
            <person name="Blumenthal R.M."/>
            <person name="Zhang X."/>
            <person name="Cheng X."/>
        </authorList>
    </citation>
    <scope>X-RAY CRYSTALLOGRAPHY (1.18 ANGSTROMS) OF 345-509 IN COMPLEX WITH N6-METHYLADENOSINE (M6A)-CONTAINING SINGLE-STRANDED DNA</scope>
    <scope>FUNCTION</scope>
</reference>
<name>YTDC1_HUMAN</name>
<feature type="chain" id="PRO_0000223076" description="YTH domain-containing protein 1">
    <location>
        <begin position="1"/>
        <end position="727"/>
    </location>
</feature>
<feature type="domain" description="YTH" evidence="3">
    <location>
        <begin position="355"/>
        <end position="492"/>
    </location>
</feature>
<feature type="region of interest" description="Disordered" evidence="4">
    <location>
        <begin position="1"/>
        <end position="338"/>
    </location>
</feature>
<feature type="region of interest" description="Disordered" evidence="4">
    <location>
        <begin position="508"/>
        <end position="564"/>
    </location>
</feature>
<feature type="region of interest" description="Disordered" evidence="4">
    <location>
        <begin position="607"/>
        <end position="643"/>
    </location>
</feature>
<feature type="region of interest" description="Disordered" evidence="4">
    <location>
        <begin position="669"/>
        <end position="727"/>
    </location>
</feature>
<feature type="compositionally biased region" description="Basic and acidic residues" evidence="4">
    <location>
        <begin position="1"/>
        <end position="12"/>
    </location>
</feature>
<feature type="compositionally biased region" description="Basic and acidic residues" evidence="4">
    <location>
        <begin position="50"/>
        <end position="59"/>
    </location>
</feature>
<feature type="compositionally biased region" description="Polar residues" evidence="4">
    <location>
        <begin position="63"/>
        <end position="90"/>
    </location>
</feature>
<feature type="compositionally biased region" description="Basic and acidic residues" evidence="4">
    <location>
        <begin position="91"/>
        <end position="115"/>
    </location>
</feature>
<feature type="compositionally biased region" description="Basic and acidic residues" evidence="4">
    <location>
        <begin position="124"/>
        <end position="144"/>
    </location>
</feature>
<feature type="compositionally biased region" description="Basic and acidic residues" evidence="4">
    <location>
        <begin position="151"/>
        <end position="163"/>
    </location>
</feature>
<feature type="compositionally biased region" description="Basic and acidic residues" evidence="4">
    <location>
        <begin position="170"/>
        <end position="185"/>
    </location>
</feature>
<feature type="compositionally biased region" description="Acidic residues" evidence="4">
    <location>
        <begin position="199"/>
        <end position="254"/>
    </location>
</feature>
<feature type="compositionally biased region" description="Basic and acidic residues" evidence="4">
    <location>
        <begin position="255"/>
        <end position="270"/>
    </location>
</feature>
<feature type="compositionally biased region" description="Polar residues" evidence="4">
    <location>
        <begin position="280"/>
        <end position="289"/>
    </location>
</feature>
<feature type="compositionally biased region" description="Low complexity" evidence="4">
    <location>
        <begin position="315"/>
        <end position="325"/>
    </location>
</feature>
<feature type="compositionally biased region" description="Basic residues" evidence="4">
    <location>
        <begin position="508"/>
        <end position="523"/>
    </location>
</feature>
<feature type="compositionally biased region" description="Basic and acidic residues" evidence="4">
    <location>
        <begin position="524"/>
        <end position="564"/>
    </location>
</feature>
<feature type="compositionally biased region" description="Basic and acidic residues" evidence="4">
    <location>
        <begin position="679"/>
        <end position="727"/>
    </location>
</feature>
<feature type="binding site" evidence="13 21 22 23 24">
    <location>
        <begin position="361"/>
        <end position="363"/>
    </location>
    <ligand>
        <name>RNA</name>
        <dbReference type="ChEBI" id="CHEBI:33697"/>
    </ligand>
    <ligandPart>
        <name>N(6)-methyladenosine 5'-phosphate residue</name>
        <dbReference type="ChEBI" id="CHEBI:74449"/>
    </ligandPart>
</feature>
<feature type="binding site" evidence="8 13 21 22 23 24">
    <location>
        <begin position="377"/>
        <end position="378"/>
    </location>
    <ligand>
        <name>RNA</name>
        <dbReference type="ChEBI" id="CHEBI:33697"/>
    </ligand>
    <ligandPart>
        <name>N(6)-methyladenosine 5'-phosphate residue</name>
        <dbReference type="ChEBI" id="CHEBI:74449"/>
    </ligandPart>
</feature>
<feature type="binding site" evidence="8">
    <location>
        <position position="428"/>
    </location>
    <ligand>
        <name>RNA</name>
        <dbReference type="ChEBI" id="CHEBI:33697"/>
    </ligand>
    <ligandPart>
        <name>N(6)-methyladenosine 5'-phosphate residue</name>
        <dbReference type="ChEBI" id="CHEBI:74449"/>
    </ligandPart>
</feature>
<feature type="binding site" evidence="13 21 22 23 24">
    <location>
        <position position="476"/>
    </location>
    <ligand>
        <name>RNA</name>
        <dbReference type="ChEBI" id="CHEBI:33697"/>
    </ligand>
    <ligandPart>
        <name>N(6)-methyladenosine 5'-phosphate residue</name>
        <dbReference type="ChEBI" id="CHEBI:74449"/>
    </ligandPart>
</feature>
<feature type="modified residue" description="Phosphoserine" evidence="2">
    <location>
        <position position="35"/>
    </location>
</feature>
<feature type="modified residue" description="Phosphoserine" evidence="33">
    <location>
        <position position="118"/>
    </location>
</feature>
<feature type="modified residue" description="Phosphoserine" evidence="33">
    <location>
        <position position="120"/>
    </location>
</feature>
<feature type="modified residue" description="Phosphoserine" evidence="31 34">
    <location>
        <position position="146"/>
    </location>
</feature>
<feature type="modified residue" description="Phosphothreonine" evidence="31 34">
    <location>
        <position position="148"/>
    </location>
</feature>
<feature type="modified residue" description="Phosphoserine" evidence="28 29 30 31 32 33 34">
    <location>
        <position position="308"/>
    </location>
</feature>
<feature type="modified residue" description="Phosphoserine" evidence="29">
    <location>
        <position position="315"/>
    </location>
</feature>
<feature type="modified residue" description="Phosphoserine" evidence="29">
    <location>
        <position position="317"/>
    </location>
</feature>
<feature type="modified residue" description="Phosphoserine" evidence="29">
    <location>
        <position position="318"/>
    </location>
</feature>
<feature type="modified residue" description="Phosphoserine" evidence="29">
    <location>
        <position position="320"/>
    </location>
</feature>
<feature type="modified residue" description="Phosphoserine" evidence="29 31 33">
    <location>
        <position position="424"/>
    </location>
</feature>
<feature type="modified residue" description="Phosphoserine" evidence="31">
    <location>
        <position position="435"/>
    </location>
</feature>
<feature type="modified residue" description="Phosphoserine" evidence="33">
    <location>
        <position position="545"/>
    </location>
</feature>
<feature type="cross-link" description="Glycyl lysine isopeptide (Lys-Gly) (interchain with G-Cter in SUMO2)" evidence="35 36">
    <location>
        <position position="96"/>
    </location>
</feature>
<feature type="splice variant" id="VSP_006818" description="In isoform 2." evidence="17 18">
    <location>
        <begin position="325"/>
        <end position="342"/>
    </location>
</feature>
<feature type="sequence variant" id="VAR_053746" description="In dbSNP:rs3813832.">
    <original>H</original>
    <variation>R</variation>
    <location>
        <position position="183"/>
    </location>
</feature>
<feature type="mutagenesis site" description="Does not affect ability to influence alternative splice site selection." evidence="7">
    <original>K</original>
    <variation>L</variation>
    <location>
        <position position="361"/>
    </location>
</feature>
<feature type="mutagenesis site" description="Does not affect ability to influence alternative splice site selection." evidence="7">
    <original>S</original>
    <variation>A</variation>
    <location>
        <position position="362"/>
    </location>
</feature>
<feature type="mutagenesis site" description="Abolished binding to N6-methyladenosine (m6A)-containing RNAs." evidence="9">
    <original>N</original>
    <variation>D</variation>
    <location>
        <position position="367"/>
    </location>
</feature>
<feature type="mutagenesis site" description="Abolishes binding to N6-methyladenosine (m6A)-containing RNAs. Abolishes binding to m6A-containing mRNAs; when associated with A-428." evidence="8 10">
    <original>W</original>
    <variation>A</variation>
    <location>
        <position position="377"/>
    </location>
</feature>
<feature type="mutagenesis site" description="Abolishes RNA-binding and ability to influence alternative splice site selection." evidence="7">
    <original>W</original>
    <variation>D</variation>
    <location>
        <position position="377"/>
    </location>
</feature>
<feature type="mutagenesis site" description="Reduced binding to N6-methyladenosine (m6A)-containing RNAs." evidence="9">
    <original>L</original>
    <variation>T</variation>
    <location>
        <position position="380"/>
    </location>
</feature>
<feature type="mutagenesis site" description="Does not affect ability to influence alternative splice site selection." evidence="7">
    <original>L</original>
    <variation>E</variation>
    <location>
        <position position="387"/>
    </location>
</feature>
<feature type="mutagenesis site" description="Does not affect ability to influence alternative splice site selection." evidence="7">
    <original>L</original>
    <variation>E</variation>
    <location>
        <position position="399"/>
    </location>
</feature>
<feature type="mutagenesis site" description="Does not affect ability to influence alternative splice site selection." evidence="7">
    <original>F</original>
    <variation>D</variation>
    <location>
        <position position="401"/>
    </location>
</feature>
<feature type="mutagenesis site" description="Does not affect ability to influence alternative splice site selection." evidence="7">
    <original>S</original>
    <variation>A</variation>
    <location>
        <position position="402"/>
    </location>
</feature>
<feature type="mutagenesis site" description="Abolishes RNA-binding and ability to influence alternative splice site selection." evidence="7">
    <original>F</original>
    <variation>D</variation>
    <location>
        <position position="409"/>
    </location>
</feature>
<feature type="mutagenesis site" description="Abolishes RNA-binding and ability to influence alternative splice site selection." evidence="7">
    <original>G</original>
    <variation>I</variation>
    <location>
        <position position="411"/>
    </location>
</feature>
<feature type="mutagenesis site" description="Abolishes binding to N6-methyladenosine (m6A)-containing RNAs. Abolishes binding to m6A-containing mRNAs; when associated with A-377." evidence="8 10">
    <original>W</original>
    <variation>A</variation>
    <location>
        <position position="428"/>
    </location>
</feature>
<feature type="mutagenesis site" description="Does not affect ability to influence alternative splice site selection." evidence="7">
    <original>W</original>
    <variation>D</variation>
    <location>
        <position position="428"/>
    </location>
</feature>
<feature type="mutagenesis site" description="Reduced binding to N6-methyladenosine (m6A)-containing RNAs." evidence="9">
    <original>M</original>
    <variation>A</variation>
    <location>
        <position position="438"/>
    </location>
</feature>
<feature type="mutagenesis site" description="Does not affect ability to influence alternative splice site selection." evidence="7">
    <original>W</original>
    <variation>D</variation>
    <location>
        <position position="447"/>
    </location>
</feature>
<feature type="mutagenesis site" description="Does not affect ability to influence alternative splice site selection." evidence="7">
    <original>N</original>
    <variation>D</variation>
    <location>
        <position position="466"/>
    </location>
</feature>
<feature type="mutagenesis site" description="Reduced binding affinity for N6-methyladenosine (m6A)-containing RNAs by 100-fold." evidence="8">
    <original>R</original>
    <variation>A</variation>
    <location>
        <position position="475"/>
    </location>
</feature>
<feature type="mutagenesis site" description="Does not affect ability to influence alternative splice site selection." evidence="7">
    <original>R</original>
    <variation>D</variation>
    <location>
        <position position="475"/>
    </location>
</feature>
<feature type="mutagenesis site" description="Reduced binding affinity for N6-methyladenosine (m6A)-containing RNAs by 9-fold." evidence="8">
    <original>R</original>
    <variation>F</variation>
    <location>
        <position position="475"/>
    </location>
</feature>
<feature type="mutagenesis site" description="Does not affect ability to influence alternative splice site selection." evidence="7">
    <original>D</original>
    <variation>K</variation>
    <location>
        <position position="476"/>
    </location>
</feature>
<feature type="sequence conflict" description="In Ref. 1; BAB71181." evidence="19" ref="1">
    <original>H</original>
    <variation>Q</variation>
    <location>
        <position position="619"/>
    </location>
</feature>
<feature type="helix" evidence="39">
    <location>
        <begin position="346"/>
        <end position="352"/>
    </location>
</feature>
<feature type="strand" evidence="39">
    <location>
        <begin position="356"/>
        <end position="363"/>
    </location>
</feature>
<feature type="helix" evidence="39">
    <location>
        <begin position="365"/>
        <end position="374"/>
    </location>
</feature>
<feature type="strand" evidence="40">
    <location>
        <begin position="376"/>
        <end position="378"/>
    </location>
</feature>
<feature type="helix" evidence="39">
    <location>
        <begin position="381"/>
        <end position="393"/>
    </location>
</feature>
<feature type="strand" evidence="39">
    <location>
        <begin position="397"/>
        <end position="403"/>
    </location>
</feature>
<feature type="strand" evidence="39">
    <location>
        <begin position="406"/>
        <end position="409"/>
    </location>
</feature>
<feature type="strand" evidence="39">
    <location>
        <begin position="411"/>
        <end position="415"/>
    </location>
</feature>
<feature type="strand" evidence="39">
    <location>
        <begin position="420"/>
        <end position="424"/>
    </location>
</feature>
<feature type="strand" evidence="41">
    <location>
        <begin position="432"/>
        <end position="434"/>
    </location>
</feature>
<feature type="helix" evidence="39">
    <location>
        <begin position="436"/>
        <end position="438"/>
    </location>
</feature>
<feature type="strand" evidence="39">
    <location>
        <begin position="442"/>
        <end position="449"/>
    </location>
</feature>
<feature type="helix" evidence="39">
    <location>
        <begin position="455"/>
        <end position="458"/>
    </location>
</feature>
<feature type="helix" evidence="39">
    <location>
        <begin position="464"/>
        <end position="466"/>
    </location>
</feature>
<feature type="strand" evidence="37">
    <location>
        <begin position="467"/>
        <end position="469"/>
    </location>
</feature>
<feature type="strand" evidence="38">
    <location>
        <begin position="478"/>
        <end position="480"/>
    </location>
</feature>
<feature type="helix" evidence="39">
    <location>
        <begin position="482"/>
        <end position="491"/>
    </location>
</feature>
<feature type="strand" evidence="37">
    <location>
        <begin position="496"/>
        <end position="498"/>
    </location>
</feature>
<feature type="helix" evidence="39">
    <location>
        <begin position="501"/>
        <end position="506"/>
    </location>
</feature>
<proteinExistence type="evidence at protein level"/>
<dbReference type="EMBL" id="AK056430">
    <property type="protein sequence ID" value="BAB71181.1"/>
    <property type="status" value="ALT_INIT"/>
    <property type="molecule type" value="mRNA"/>
</dbReference>
<dbReference type="EMBL" id="AC074378">
    <property type="protein sequence ID" value="AAY41024.1"/>
    <property type="status" value="ALT_SEQ"/>
    <property type="molecule type" value="Genomic_DNA"/>
</dbReference>
<dbReference type="EMBL" id="BC041119">
    <property type="protein sequence ID" value="AAH41119.1"/>
    <property type="molecule type" value="mRNA"/>
</dbReference>
<dbReference type="EMBL" id="BC053863">
    <property type="protein sequence ID" value="AAH53863.1"/>
    <property type="molecule type" value="mRNA"/>
</dbReference>
<dbReference type="EMBL" id="AB075846">
    <property type="protein sequence ID" value="BAB85552.1"/>
    <property type="molecule type" value="mRNA"/>
</dbReference>
<dbReference type="CCDS" id="CCDS33992.1">
    <molecule id="Q96MU7-1"/>
</dbReference>
<dbReference type="CCDS" id="CCDS3522.2">
    <molecule id="Q96MU7-2"/>
</dbReference>
<dbReference type="RefSeq" id="NP_001026902.1">
    <molecule id="Q96MU7-1"/>
    <property type="nucleotide sequence ID" value="NM_001031732.4"/>
</dbReference>
<dbReference type="RefSeq" id="NP_001317627.1">
    <property type="nucleotide sequence ID" value="NM_001330698.1"/>
</dbReference>
<dbReference type="RefSeq" id="NP_588611.2">
    <molecule id="Q96MU7-2"/>
    <property type="nucleotide sequence ID" value="NM_133370.4"/>
</dbReference>
<dbReference type="PDB" id="2YUD">
    <property type="method" value="NMR"/>
    <property type="chains" value="A=337-509"/>
</dbReference>
<dbReference type="PDB" id="4R3H">
    <property type="method" value="X-ray"/>
    <property type="resolution" value="1.90 A"/>
    <property type="chains" value="A/B=345-509"/>
</dbReference>
<dbReference type="PDB" id="4R3I">
    <property type="method" value="X-ray"/>
    <property type="resolution" value="1.80 A"/>
    <property type="chains" value="A=345-509"/>
</dbReference>
<dbReference type="PDB" id="6RT4">
    <property type="method" value="X-ray"/>
    <property type="resolution" value="1.49 A"/>
    <property type="chains" value="A/B=345-509"/>
</dbReference>
<dbReference type="PDB" id="6RT5">
    <property type="method" value="X-ray"/>
    <property type="resolution" value="2.30 A"/>
    <property type="chains" value="B/C=345-509"/>
</dbReference>
<dbReference type="PDB" id="6RT6">
    <property type="method" value="X-ray"/>
    <property type="resolution" value="1.46 A"/>
    <property type="chains" value="B/C=345-509"/>
</dbReference>
<dbReference type="PDB" id="6RT7">
    <property type="method" value="X-ray"/>
    <property type="resolution" value="1.73 A"/>
    <property type="chains" value="B/C=345-509"/>
</dbReference>
<dbReference type="PDB" id="6SYZ">
    <property type="method" value="X-ray"/>
    <property type="resolution" value="2.28 A"/>
    <property type="chains" value="A/B=345-509"/>
</dbReference>
<dbReference type="PDB" id="6SZ1">
    <property type="method" value="X-ray"/>
    <property type="resolution" value="1.75 A"/>
    <property type="chains" value="A/B=345-509"/>
</dbReference>
<dbReference type="PDB" id="6SZ2">
    <property type="method" value="X-ray"/>
    <property type="resolution" value="1.52 A"/>
    <property type="chains" value="A/B=345-509"/>
</dbReference>
<dbReference type="PDB" id="6SZ3">
    <property type="method" value="X-ray"/>
    <property type="resolution" value="1.28 A"/>
    <property type="chains" value="A/B=345-509"/>
</dbReference>
<dbReference type="PDB" id="6SZL">
    <property type="method" value="X-ray"/>
    <property type="resolution" value="1.45 A"/>
    <property type="chains" value="A/B=345-509"/>
</dbReference>
<dbReference type="PDB" id="6SZN">
    <property type="method" value="X-ray"/>
    <property type="resolution" value="1.47 A"/>
    <property type="chains" value="A/B=345-509"/>
</dbReference>
<dbReference type="PDB" id="6SZR">
    <property type="method" value="X-ray"/>
    <property type="resolution" value="1.64 A"/>
    <property type="chains" value="A/B=345-509"/>
</dbReference>
<dbReference type="PDB" id="6SZT">
    <property type="method" value="X-ray"/>
    <property type="resolution" value="1.50 A"/>
    <property type="chains" value="A/B=345-509"/>
</dbReference>
<dbReference type="PDB" id="6SZX">
    <property type="method" value="X-ray"/>
    <property type="resolution" value="1.17 A"/>
    <property type="chains" value="A/B=345-509"/>
</dbReference>
<dbReference type="PDB" id="6SZY">
    <property type="method" value="X-ray"/>
    <property type="resolution" value="1.79 A"/>
    <property type="chains" value="A/B=345-509"/>
</dbReference>
<dbReference type="PDB" id="6T01">
    <property type="method" value="X-ray"/>
    <property type="resolution" value="1.50 A"/>
    <property type="chains" value="A/B=345-509"/>
</dbReference>
<dbReference type="PDB" id="6T02">
    <property type="method" value="X-ray"/>
    <property type="resolution" value="1.10 A"/>
    <property type="chains" value="A/B=345-509"/>
</dbReference>
<dbReference type="PDB" id="6T03">
    <property type="method" value="X-ray"/>
    <property type="resolution" value="1.50 A"/>
    <property type="chains" value="A/B=345-509"/>
</dbReference>
<dbReference type="PDB" id="6T04">
    <property type="method" value="X-ray"/>
    <property type="resolution" value="1.50 A"/>
    <property type="chains" value="A/B=345-509"/>
</dbReference>
<dbReference type="PDB" id="6T05">
    <property type="method" value="X-ray"/>
    <property type="resolution" value="1.50 A"/>
    <property type="chains" value="A/B=345-509"/>
</dbReference>
<dbReference type="PDB" id="6T06">
    <property type="method" value="X-ray"/>
    <property type="resolution" value="2.40 A"/>
    <property type="chains" value="A/B=345-509"/>
</dbReference>
<dbReference type="PDB" id="6T07">
    <property type="method" value="X-ray"/>
    <property type="resolution" value="1.50 A"/>
    <property type="chains" value="A/B=345-509"/>
</dbReference>
<dbReference type="PDB" id="6T08">
    <property type="method" value="X-ray"/>
    <property type="resolution" value="1.41 A"/>
    <property type="chains" value="A/B=345-509"/>
</dbReference>
<dbReference type="PDB" id="6T09">
    <property type="method" value="X-ray"/>
    <property type="resolution" value="1.75 A"/>
    <property type="chains" value="A/B=345-509"/>
</dbReference>
<dbReference type="PDB" id="6T0A">
    <property type="method" value="X-ray"/>
    <property type="resolution" value="2.02 A"/>
    <property type="chains" value="A/B=345-509"/>
</dbReference>
<dbReference type="PDB" id="6T0C">
    <property type="method" value="X-ray"/>
    <property type="resolution" value="2.03 A"/>
    <property type="chains" value="A/B=345-509"/>
</dbReference>
<dbReference type="PDB" id="6T0D">
    <property type="method" value="X-ray"/>
    <property type="resolution" value="1.43 A"/>
    <property type="chains" value="A/B=345-509"/>
</dbReference>
<dbReference type="PDB" id="6T0O">
    <property type="method" value="X-ray"/>
    <property type="resolution" value="1.71 A"/>
    <property type="chains" value="A/B=345-509"/>
</dbReference>
<dbReference type="PDB" id="6T0X">
    <property type="method" value="X-ray"/>
    <property type="resolution" value="1.36 A"/>
    <property type="chains" value="A/B=345-509"/>
</dbReference>
<dbReference type="PDB" id="6T0Z">
    <property type="method" value="X-ray"/>
    <property type="resolution" value="1.43 A"/>
    <property type="chains" value="A/B=345-509"/>
</dbReference>
<dbReference type="PDB" id="6T10">
    <property type="method" value="X-ray"/>
    <property type="resolution" value="1.48 A"/>
    <property type="chains" value="A/B=345-509"/>
</dbReference>
<dbReference type="PDB" id="6T11">
    <property type="method" value="X-ray"/>
    <property type="resolution" value="1.49 A"/>
    <property type="chains" value="A/B=345-509"/>
</dbReference>
<dbReference type="PDB" id="6T12">
    <property type="method" value="X-ray"/>
    <property type="resolution" value="1.46 A"/>
    <property type="chains" value="A/B=345-509"/>
</dbReference>
<dbReference type="PDB" id="6WE8">
    <property type="method" value="X-ray"/>
    <property type="resolution" value="1.18 A"/>
    <property type="chains" value="A/B=345-509"/>
</dbReference>
<dbReference type="PDB" id="6WE9">
    <property type="method" value="X-ray"/>
    <property type="resolution" value="1.59 A"/>
    <property type="chains" value="A/C=345-509"/>
</dbReference>
<dbReference type="PDB" id="6WEA">
    <property type="method" value="X-ray"/>
    <property type="resolution" value="1.80 A"/>
    <property type="chains" value="A/B/C/D=345-509"/>
</dbReference>
<dbReference type="PDB" id="6YKE">
    <property type="method" value="X-ray"/>
    <property type="resolution" value="1.52 A"/>
    <property type="chains" value="A/B=345-509"/>
</dbReference>
<dbReference type="PDB" id="6YKI">
    <property type="method" value="X-ray"/>
    <property type="resolution" value="1.30 A"/>
    <property type="chains" value="A/B=345-509"/>
</dbReference>
<dbReference type="PDB" id="6YKJ">
    <property type="method" value="X-ray"/>
    <property type="resolution" value="1.60 A"/>
    <property type="chains" value="A/B=345-509"/>
</dbReference>
<dbReference type="PDB" id="6YKZ">
    <property type="method" value="X-ray"/>
    <property type="resolution" value="1.20 A"/>
    <property type="chains" value="A/B=345-509"/>
</dbReference>
<dbReference type="PDB" id="6YL0">
    <property type="method" value="X-ray"/>
    <property type="resolution" value="1.20 A"/>
    <property type="chains" value="A/B=345-509"/>
</dbReference>
<dbReference type="PDB" id="6YL8">
    <property type="method" value="X-ray"/>
    <property type="resolution" value="1.50 A"/>
    <property type="chains" value="A/B=345-509"/>
</dbReference>
<dbReference type="PDB" id="6YL9">
    <property type="method" value="X-ray"/>
    <property type="resolution" value="1.50 A"/>
    <property type="chains" value="A/B=345-509"/>
</dbReference>
<dbReference type="PDB" id="6YM2">
    <property type="method" value="X-ray"/>
    <property type="resolution" value="1.70 A"/>
    <property type="chains" value="A/B=345-509"/>
</dbReference>
<dbReference type="PDB" id="6YM8">
    <property type="method" value="X-ray"/>
    <property type="resolution" value="1.50 A"/>
    <property type="chains" value="A/B=345-509"/>
</dbReference>
<dbReference type="PDB" id="6YNI">
    <property type="method" value="X-ray"/>
    <property type="resolution" value="1.36 A"/>
    <property type="chains" value="A/B=345-509"/>
</dbReference>
<dbReference type="PDB" id="6YNJ">
    <property type="method" value="X-ray"/>
    <property type="resolution" value="1.50 A"/>
    <property type="chains" value="A/B=345-509"/>
</dbReference>
<dbReference type="PDB" id="6YNK">
    <property type="method" value="X-ray"/>
    <property type="resolution" value="1.30 A"/>
    <property type="chains" value="A/B=345-509"/>
</dbReference>
<dbReference type="PDB" id="6YNL">
    <property type="method" value="X-ray"/>
    <property type="resolution" value="1.50 A"/>
    <property type="chains" value="A/B=345-509"/>
</dbReference>
<dbReference type="PDB" id="6YNM">
    <property type="method" value="X-ray"/>
    <property type="resolution" value="1.50 A"/>
    <property type="chains" value="A/B=345-509"/>
</dbReference>
<dbReference type="PDB" id="6YNN">
    <property type="method" value="X-ray"/>
    <property type="resolution" value="1.20 A"/>
    <property type="chains" value="A/B=345-509"/>
</dbReference>
<dbReference type="PDB" id="6YNO">
    <property type="method" value="X-ray"/>
    <property type="resolution" value="1.40 A"/>
    <property type="chains" value="A/B=345-509"/>
</dbReference>
<dbReference type="PDB" id="6YNP">
    <property type="method" value="X-ray"/>
    <property type="resolution" value="1.10 A"/>
    <property type="chains" value="A/B=345-509"/>
</dbReference>
<dbReference type="PDB" id="6YOQ">
    <property type="method" value="X-ray"/>
    <property type="resolution" value="1.30 A"/>
    <property type="chains" value="A/B=345-509"/>
</dbReference>
<dbReference type="PDB" id="6ZCM">
    <property type="method" value="X-ray"/>
    <property type="resolution" value="1.24 A"/>
    <property type="chains" value="A/B=345-509"/>
</dbReference>
<dbReference type="PDB" id="6ZCN">
    <property type="method" value="X-ray"/>
    <property type="resolution" value="1.60 A"/>
    <property type="chains" value="A/B=345-509"/>
</dbReference>
<dbReference type="PDB" id="6ZD9">
    <property type="method" value="X-ray"/>
    <property type="resolution" value="1.51 A"/>
    <property type="chains" value="A/B=345-509"/>
</dbReference>
<dbReference type="PDB" id="7L4X">
    <property type="method" value="X-ray"/>
    <property type="resolution" value="1.79 A"/>
    <property type="chains" value="B=345-509"/>
</dbReference>
<dbReference type="PDB" id="7L4Y">
    <property type="method" value="X-ray"/>
    <property type="resolution" value="1.79 A"/>
    <property type="chains" value="B=345-509"/>
</dbReference>
<dbReference type="PDB" id="7P87">
    <property type="method" value="X-ray"/>
    <property type="resolution" value="1.30 A"/>
    <property type="chains" value="A/B=345-509"/>
</dbReference>
<dbReference type="PDB" id="7P88">
    <property type="method" value="X-ray"/>
    <property type="resolution" value="1.50 A"/>
    <property type="chains" value="A/B=345-509"/>
</dbReference>
<dbReference type="PDB" id="7P8A">
    <property type="method" value="X-ray"/>
    <property type="resolution" value="1.70 A"/>
    <property type="chains" value="A/B=345-509"/>
</dbReference>
<dbReference type="PDB" id="7P8B">
    <property type="method" value="X-ray"/>
    <property type="resolution" value="1.20 A"/>
    <property type="chains" value="A/B=345-509"/>
</dbReference>
<dbReference type="PDB" id="7P8F">
    <property type="method" value="X-ray"/>
    <property type="resolution" value="1.50 A"/>
    <property type="chains" value="A/B=345-509"/>
</dbReference>
<dbReference type="PDB" id="7PJ7">
    <property type="method" value="X-ray"/>
    <property type="resolution" value="1.41 A"/>
    <property type="chains" value="A/B=345-509"/>
</dbReference>
<dbReference type="PDB" id="7PJ8">
    <property type="method" value="X-ray"/>
    <property type="resolution" value="1.40 A"/>
    <property type="chains" value="A/B=345-509"/>
</dbReference>
<dbReference type="PDB" id="7PJ9">
    <property type="method" value="X-ray"/>
    <property type="resolution" value="1.72 A"/>
    <property type="chains" value="A/B=345-509"/>
</dbReference>
<dbReference type="PDB" id="7PJA">
    <property type="method" value="X-ray"/>
    <property type="resolution" value="1.85 A"/>
    <property type="chains" value="A/B=345-509"/>
</dbReference>
<dbReference type="PDB" id="7PJB">
    <property type="method" value="X-ray"/>
    <property type="resolution" value="1.90 A"/>
    <property type="chains" value="A/B=345-509"/>
</dbReference>
<dbReference type="PDB" id="7PJP">
    <property type="method" value="X-ray"/>
    <property type="resolution" value="1.61 A"/>
    <property type="chains" value="A/B=345-509"/>
</dbReference>
<dbReference type="PDB" id="7PJQ">
    <property type="method" value="X-ray"/>
    <property type="resolution" value="1.20 A"/>
    <property type="chains" value="A/B=345-509"/>
</dbReference>
<dbReference type="PDB" id="7PO6">
    <property type="method" value="X-ray"/>
    <property type="resolution" value="1.77 A"/>
    <property type="chains" value="A/B/C=345-509"/>
</dbReference>
<dbReference type="PDB" id="8K2E">
    <property type="method" value="X-ray"/>
    <property type="resolution" value="1.60 A"/>
    <property type="chains" value="A/B=345-507"/>
</dbReference>
<dbReference type="PDB" id="8Q2Q">
    <property type="method" value="X-ray"/>
    <property type="resolution" value="1.30 A"/>
    <property type="chains" value="A/B=345-509"/>
</dbReference>
<dbReference type="PDB" id="8Q2R">
    <property type="method" value="X-ray"/>
    <property type="resolution" value="1.60 A"/>
    <property type="chains" value="A/B=345-509"/>
</dbReference>
<dbReference type="PDB" id="8Q2S">
    <property type="method" value="X-ray"/>
    <property type="resolution" value="1.41 A"/>
    <property type="chains" value="A/B=345-509"/>
</dbReference>
<dbReference type="PDB" id="8Q2T">
    <property type="method" value="X-ray"/>
    <property type="resolution" value="1.41 A"/>
    <property type="chains" value="A/B=345-509"/>
</dbReference>
<dbReference type="PDB" id="8Q2U">
    <property type="method" value="X-ray"/>
    <property type="resolution" value="1.36 A"/>
    <property type="chains" value="A/B=345-509"/>
</dbReference>
<dbReference type="PDB" id="8Q2V">
    <property type="method" value="X-ray"/>
    <property type="resolution" value="1.71 A"/>
    <property type="chains" value="A/B=345-509"/>
</dbReference>
<dbReference type="PDB" id="8Q2W">
    <property type="method" value="X-ray"/>
    <property type="resolution" value="1.41 A"/>
    <property type="chains" value="A/B=345-509"/>
</dbReference>
<dbReference type="PDB" id="8Q2X">
    <property type="method" value="X-ray"/>
    <property type="resolution" value="1.60 A"/>
    <property type="chains" value="A/B=345-509"/>
</dbReference>
<dbReference type="PDB" id="8Q2Y">
    <property type="method" value="X-ray"/>
    <property type="resolution" value="1.71 A"/>
    <property type="chains" value="A/B=345-509"/>
</dbReference>
<dbReference type="PDB" id="8Q31">
    <property type="method" value="X-ray"/>
    <property type="resolution" value="1.32 A"/>
    <property type="chains" value="A/B=345-509"/>
</dbReference>
<dbReference type="PDB" id="8Q32">
    <property type="method" value="X-ray"/>
    <property type="resolution" value="1.43 A"/>
    <property type="chains" value="A/B=345-509"/>
</dbReference>
<dbReference type="PDB" id="8Q33">
    <property type="method" value="X-ray"/>
    <property type="resolution" value="1.43 A"/>
    <property type="chains" value="A/B=345-509"/>
</dbReference>
<dbReference type="PDB" id="8Q35">
    <property type="method" value="X-ray"/>
    <property type="resolution" value="1.31 A"/>
    <property type="chains" value="A/B=345-509"/>
</dbReference>
<dbReference type="PDB" id="8Q37">
    <property type="method" value="X-ray"/>
    <property type="resolution" value="1.28 A"/>
    <property type="chains" value="A/B=345-509"/>
</dbReference>
<dbReference type="PDB" id="8Q38">
    <property type="method" value="X-ray"/>
    <property type="resolution" value="1.42 A"/>
    <property type="chains" value="A/B=345-509"/>
</dbReference>
<dbReference type="PDB" id="8Q39">
    <property type="method" value="X-ray"/>
    <property type="resolution" value="1.42 A"/>
    <property type="chains" value="A/B=345-509"/>
</dbReference>
<dbReference type="PDB" id="8Q3A">
    <property type="method" value="X-ray"/>
    <property type="resolution" value="1.43 A"/>
    <property type="chains" value="A/B=345-509"/>
</dbReference>
<dbReference type="PDB" id="8Q3G">
    <property type="method" value="X-ray"/>
    <property type="resolution" value="1.42 A"/>
    <property type="chains" value="A/B=345-509"/>
</dbReference>
<dbReference type="PDB" id="8Q4M">
    <property type="method" value="X-ray"/>
    <property type="resolution" value="1.43 A"/>
    <property type="chains" value="A/B=345-509"/>
</dbReference>
<dbReference type="PDB" id="8Q4N">
    <property type="method" value="X-ray"/>
    <property type="resolution" value="1.42 A"/>
    <property type="chains" value="A/B=345-509"/>
</dbReference>
<dbReference type="PDB" id="8Q4P">
    <property type="method" value="X-ray"/>
    <property type="resolution" value="1.43 A"/>
    <property type="chains" value="A/B=345-509"/>
</dbReference>
<dbReference type="PDB" id="8Q4Q">
    <property type="method" value="X-ray"/>
    <property type="resolution" value="1.40 A"/>
    <property type="chains" value="A/B=345-509"/>
</dbReference>
<dbReference type="PDB" id="8Q4R">
    <property type="method" value="X-ray"/>
    <property type="resolution" value="1.43 A"/>
    <property type="chains" value="A/B=345-509"/>
</dbReference>
<dbReference type="PDB" id="8Q4T">
    <property type="method" value="X-ray"/>
    <property type="resolution" value="1.51 A"/>
    <property type="chains" value="A/B=345-509"/>
</dbReference>
<dbReference type="PDB" id="8Q4U">
    <property type="method" value="X-ray"/>
    <property type="resolution" value="1.37 A"/>
    <property type="chains" value="A/B=345-509"/>
</dbReference>
<dbReference type="PDB" id="8Q4V">
    <property type="method" value="X-ray"/>
    <property type="resolution" value="1.36 A"/>
    <property type="chains" value="A/B=345-509"/>
</dbReference>
<dbReference type="PDB" id="8Q4W">
    <property type="method" value="X-ray"/>
    <property type="resolution" value="1.61 A"/>
    <property type="chains" value="A/B=345-509"/>
</dbReference>
<dbReference type="PDBsum" id="2YUD"/>
<dbReference type="PDBsum" id="4R3H"/>
<dbReference type="PDBsum" id="4R3I"/>
<dbReference type="PDBsum" id="6RT4"/>
<dbReference type="PDBsum" id="6RT5"/>
<dbReference type="PDBsum" id="6RT6"/>
<dbReference type="PDBsum" id="6RT7"/>
<dbReference type="PDBsum" id="6SYZ"/>
<dbReference type="PDBsum" id="6SZ1"/>
<dbReference type="PDBsum" id="6SZ2"/>
<dbReference type="PDBsum" id="6SZ3"/>
<dbReference type="PDBsum" id="6SZL"/>
<dbReference type="PDBsum" id="6SZN"/>
<dbReference type="PDBsum" id="6SZR"/>
<dbReference type="PDBsum" id="6SZT"/>
<dbReference type="PDBsum" id="6SZX"/>
<dbReference type="PDBsum" id="6SZY"/>
<dbReference type="PDBsum" id="6T01"/>
<dbReference type="PDBsum" id="6T02"/>
<dbReference type="PDBsum" id="6T03"/>
<dbReference type="PDBsum" id="6T04"/>
<dbReference type="PDBsum" id="6T05"/>
<dbReference type="PDBsum" id="6T06"/>
<dbReference type="PDBsum" id="6T07"/>
<dbReference type="PDBsum" id="6T08"/>
<dbReference type="PDBsum" id="6T09"/>
<dbReference type="PDBsum" id="6T0A"/>
<dbReference type="PDBsum" id="6T0C"/>
<dbReference type="PDBsum" id="6T0D"/>
<dbReference type="PDBsum" id="6T0O"/>
<dbReference type="PDBsum" id="6T0X"/>
<dbReference type="PDBsum" id="6T0Z"/>
<dbReference type="PDBsum" id="6T10"/>
<dbReference type="PDBsum" id="6T11"/>
<dbReference type="PDBsum" id="6T12"/>
<dbReference type="PDBsum" id="6WE8"/>
<dbReference type="PDBsum" id="6WE9"/>
<dbReference type="PDBsum" id="6WEA"/>
<dbReference type="PDBsum" id="6YKE"/>
<dbReference type="PDBsum" id="6YKI"/>
<dbReference type="PDBsum" id="6YKJ"/>
<dbReference type="PDBsum" id="6YKZ"/>
<dbReference type="PDBsum" id="6YL0"/>
<dbReference type="PDBsum" id="6YL8"/>
<dbReference type="PDBsum" id="6YL9"/>
<dbReference type="PDBsum" id="6YM2"/>
<dbReference type="PDBsum" id="6YM8"/>
<dbReference type="PDBsum" id="6YNI"/>
<dbReference type="PDBsum" id="6YNJ"/>
<dbReference type="PDBsum" id="6YNK"/>
<dbReference type="PDBsum" id="6YNL"/>
<dbReference type="PDBsum" id="6YNM"/>
<dbReference type="PDBsum" id="6YNN"/>
<dbReference type="PDBsum" id="6YNO"/>
<dbReference type="PDBsum" id="6YNP"/>
<dbReference type="PDBsum" id="6YOQ"/>
<dbReference type="PDBsum" id="6ZCM"/>
<dbReference type="PDBsum" id="6ZCN"/>
<dbReference type="PDBsum" id="6ZD9"/>
<dbReference type="PDBsum" id="7L4X"/>
<dbReference type="PDBsum" id="7L4Y"/>
<dbReference type="PDBsum" id="7P87"/>
<dbReference type="PDBsum" id="7P88"/>
<dbReference type="PDBsum" id="7P8A"/>
<dbReference type="PDBsum" id="7P8B"/>
<dbReference type="PDBsum" id="7P8F"/>
<dbReference type="PDBsum" id="7PJ7"/>
<dbReference type="PDBsum" id="7PJ8"/>
<dbReference type="PDBsum" id="7PJ9"/>
<dbReference type="PDBsum" id="7PJA"/>
<dbReference type="PDBsum" id="7PJB"/>
<dbReference type="PDBsum" id="7PJP"/>
<dbReference type="PDBsum" id="7PJQ"/>
<dbReference type="PDBsum" id="7PO6"/>
<dbReference type="PDBsum" id="8K2E"/>
<dbReference type="PDBsum" id="8Q2Q"/>
<dbReference type="PDBsum" id="8Q2R"/>
<dbReference type="PDBsum" id="8Q2S"/>
<dbReference type="PDBsum" id="8Q2T"/>
<dbReference type="PDBsum" id="8Q2U"/>
<dbReference type="PDBsum" id="8Q2V"/>
<dbReference type="PDBsum" id="8Q2W"/>
<dbReference type="PDBsum" id="8Q2X"/>
<dbReference type="PDBsum" id="8Q2Y"/>
<dbReference type="PDBsum" id="8Q31"/>
<dbReference type="PDBsum" id="8Q32"/>
<dbReference type="PDBsum" id="8Q33"/>
<dbReference type="PDBsum" id="8Q35"/>
<dbReference type="PDBsum" id="8Q37"/>
<dbReference type="PDBsum" id="8Q38"/>
<dbReference type="PDBsum" id="8Q39"/>
<dbReference type="PDBsum" id="8Q3A"/>
<dbReference type="PDBsum" id="8Q3G"/>
<dbReference type="PDBsum" id="8Q4M"/>
<dbReference type="PDBsum" id="8Q4N"/>
<dbReference type="PDBsum" id="8Q4P"/>
<dbReference type="PDBsum" id="8Q4Q"/>
<dbReference type="PDBsum" id="8Q4R"/>
<dbReference type="PDBsum" id="8Q4T"/>
<dbReference type="PDBsum" id="8Q4U"/>
<dbReference type="PDBsum" id="8Q4V"/>
<dbReference type="PDBsum" id="8Q4W"/>
<dbReference type="BMRB" id="Q96MU7"/>
<dbReference type="SMR" id="Q96MU7"/>
<dbReference type="BioGRID" id="124871">
    <property type="interactions" value="431"/>
</dbReference>
<dbReference type="FunCoup" id="Q96MU7">
    <property type="interactions" value="4303"/>
</dbReference>
<dbReference type="IntAct" id="Q96MU7">
    <property type="interactions" value="121"/>
</dbReference>
<dbReference type="MINT" id="Q96MU7"/>
<dbReference type="STRING" id="9606.ENSP00000463982"/>
<dbReference type="BindingDB" id="Q96MU7"/>
<dbReference type="ChEMBL" id="CHEMBL5169187"/>
<dbReference type="GuidetoPHARMACOLOGY" id="3288"/>
<dbReference type="GlyGen" id="Q96MU7">
    <property type="glycosylation" value="1 site, 1 O-linked glycan (1 site)"/>
</dbReference>
<dbReference type="iPTMnet" id="Q96MU7"/>
<dbReference type="PhosphoSitePlus" id="Q96MU7"/>
<dbReference type="SwissPalm" id="Q96MU7"/>
<dbReference type="BioMuta" id="YTHDC1"/>
<dbReference type="DMDM" id="47606762"/>
<dbReference type="jPOST" id="Q96MU7"/>
<dbReference type="MassIVE" id="Q96MU7"/>
<dbReference type="PaxDb" id="9606-ENSP00000339245"/>
<dbReference type="PeptideAtlas" id="Q96MU7"/>
<dbReference type="ProteomicsDB" id="77413">
    <molecule id="Q96MU7-1"/>
</dbReference>
<dbReference type="ProteomicsDB" id="77414">
    <molecule id="Q96MU7-2"/>
</dbReference>
<dbReference type="Pumba" id="Q96MU7"/>
<dbReference type="Antibodypedia" id="52214">
    <property type="antibodies" value="98 antibodies from 23 providers"/>
</dbReference>
<dbReference type="DNASU" id="91746"/>
<dbReference type="Ensembl" id="ENST00000344157.9">
    <molecule id="Q96MU7-1"/>
    <property type="protein sequence ID" value="ENSP00000339245.4"/>
    <property type="gene ID" value="ENSG00000083896.13"/>
</dbReference>
<dbReference type="Ensembl" id="ENST00000355665.7">
    <molecule id="Q96MU7-2"/>
    <property type="protein sequence ID" value="ENSP00000347888.3"/>
    <property type="gene ID" value="ENSG00000083896.13"/>
</dbReference>
<dbReference type="Ensembl" id="ENST00000613637.3">
    <molecule id="Q96MU7-2"/>
    <property type="protein sequence ID" value="ENSP00000484604.1"/>
    <property type="gene ID" value="ENSG00000275272.4"/>
</dbReference>
<dbReference type="Ensembl" id="ENST00000615500.4">
    <molecule id="Q96MU7-1"/>
    <property type="protein sequence ID" value="ENSP00000479213.1"/>
    <property type="gene ID" value="ENSG00000275272.4"/>
</dbReference>
<dbReference type="GeneID" id="91746"/>
<dbReference type="KEGG" id="hsa:91746"/>
<dbReference type="MANE-Select" id="ENST00000344157.9">
    <property type="protein sequence ID" value="ENSP00000339245.4"/>
    <property type="RefSeq nucleotide sequence ID" value="NM_001031732.4"/>
    <property type="RefSeq protein sequence ID" value="NP_001026902.1"/>
</dbReference>
<dbReference type="UCSC" id="uc003hdx.4">
    <molecule id="Q96MU7-1"/>
    <property type="organism name" value="human"/>
</dbReference>
<dbReference type="AGR" id="HGNC:30626"/>
<dbReference type="CTD" id="91746"/>
<dbReference type="DisGeNET" id="91746"/>
<dbReference type="GeneCards" id="YTHDC1"/>
<dbReference type="HGNC" id="HGNC:30626">
    <property type="gene designation" value="YTHDC1"/>
</dbReference>
<dbReference type="HPA" id="ENSG00000083896">
    <property type="expression patterns" value="Low tissue specificity"/>
</dbReference>
<dbReference type="neXtProt" id="NX_Q96MU7"/>
<dbReference type="OpenTargets" id="ENSG00000083896"/>
<dbReference type="PharmGKB" id="PA143485673"/>
<dbReference type="VEuPathDB" id="HostDB:ENSG00000083896"/>
<dbReference type="eggNOG" id="KOG1902">
    <property type="taxonomic scope" value="Eukaryota"/>
</dbReference>
<dbReference type="GeneTree" id="ENSGT00940000155803"/>
<dbReference type="InParanoid" id="Q96MU7"/>
<dbReference type="OMA" id="RKTRMTS"/>
<dbReference type="OrthoDB" id="5842105at2759"/>
<dbReference type="PAN-GO" id="Q96MU7">
    <property type="GO annotations" value="5 GO annotations based on evolutionary models"/>
</dbReference>
<dbReference type="PhylomeDB" id="Q96MU7"/>
<dbReference type="TreeFam" id="TF325590"/>
<dbReference type="PathwayCommons" id="Q96MU7"/>
<dbReference type="SignaLink" id="Q96MU7"/>
<dbReference type="SIGNOR" id="Q96MU7"/>
<dbReference type="BioGRID-ORCS" id="91746">
    <property type="hits" value="471 hits in 1165 CRISPR screens"/>
</dbReference>
<dbReference type="CD-CODE" id="0C658009">
    <property type="entry name" value="nYAC"/>
</dbReference>
<dbReference type="CD-CODE" id="62EA6512">
    <property type="entry name" value="Sam68 nuclear body"/>
</dbReference>
<dbReference type="CD-CODE" id="804901D1">
    <property type="entry name" value="Nuclear speckle"/>
</dbReference>
<dbReference type="ChiTaRS" id="YTHDC1">
    <property type="organism name" value="human"/>
</dbReference>
<dbReference type="EvolutionaryTrace" id="Q96MU7"/>
<dbReference type="GeneWiki" id="YTHDC1"/>
<dbReference type="GenomeRNAi" id="91746"/>
<dbReference type="Pharos" id="Q96MU7">
    <property type="development level" value="Tbio"/>
</dbReference>
<dbReference type="PRO" id="PR:Q96MU7"/>
<dbReference type="Proteomes" id="UP000005640">
    <property type="component" value="Chromosome 4"/>
</dbReference>
<dbReference type="RNAct" id="Q96MU7">
    <property type="molecule type" value="protein"/>
</dbReference>
<dbReference type="Bgee" id="ENSG00000083896">
    <property type="expression patterns" value="Expressed in calcaneal tendon and 102 other cell types or tissues"/>
</dbReference>
<dbReference type="ExpressionAtlas" id="Q96MU7">
    <property type="expression patterns" value="baseline and differential"/>
</dbReference>
<dbReference type="GO" id="GO:0016607">
    <property type="term" value="C:nuclear speck"/>
    <property type="evidence" value="ECO:0000314"/>
    <property type="project" value="UniProtKB"/>
</dbReference>
<dbReference type="GO" id="GO:0005654">
    <property type="term" value="C:nucleoplasm"/>
    <property type="evidence" value="ECO:0000314"/>
    <property type="project" value="HPA"/>
</dbReference>
<dbReference type="GO" id="GO:0005634">
    <property type="term" value="C:nucleus"/>
    <property type="evidence" value="ECO:0000314"/>
    <property type="project" value="UniProtKB"/>
</dbReference>
<dbReference type="GO" id="GO:0005886">
    <property type="term" value="C:plasma membrane"/>
    <property type="evidence" value="ECO:0000314"/>
    <property type="project" value="HPA"/>
</dbReference>
<dbReference type="GO" id="GO:0003729">
    <property type="term" value="F:mRNA binding"/>
    <property type="evidence" value="ECO:0000318"/>
    <property type="project" value="GO_Central"/>
</dbReference>
<dbReference type="GO" id="GO:1990247">
    <property type="term" value="F:N6-methyladenosine-containing RNA reader activity"/>
    <property type="evidence" value="ECO:0000314"/>
    <property type="project" value="UniProtKB"/>
</dbReference>
<dbReference type="GO" id="GO:0003723">
    <property type="term" value="F:RNA binding"/>
    <property type="evidence" value="ECO:0000314"/>
    <property type="project" value="UniProtKB"/>
</dbReference>
<dbReference type="GO" id="GO:0009048">
    <property type="term" value="P:dosage compensation by inactivation of X chromosome"/>
    <property type="evidence" value="ECO:0000314"/>
    <property type="project" value="UniProtKB"/>
</dbReference>
<dbReference type="GO" id="GO:0001701">
    <property type="term" value="P:in utero embryonic development"/>
    <property type="evidence" value="ECO:0007669"/>
    <property type="project" value="Ensembl"/>
</dbReference>
<dbReference type="GO" id="GO:0110104">
    <property type="term" value="P:mRNA alternative polyadenylation"/>
    <property type="evidence" value="ECO:0007669"/>
    <property type="project" value="Ensembl"/>
</dbReference>
<dbReference type="GO" id="GO:0006406">
    <property type="term" value="P:mRNA export from nucleus"/>
    <property type="evidence" value="ECO:0000314"/>
    <property type="project" value="UniProtKB"/>
</dbReference>
<dbReference type="GO" id="GO:0006376">
    <property type="term" value="P:mRNA splice site recognition"/>
    <property type="evidence" value="ECO:0000314"/>
    <property type="project" value="UniProtKB"/>
</dbReference>
<dbReference type="GO" id="GO:0000398">
    <property type="term" value="P:mRNA splicing, via spliceosome"/>
    <property type="evidence" value="ECO:0000318"/>
    <property type="project" value="GO_Central"/>
</dbReference>
<dbReference type="GO" id="GO:0010608">
    <property type="term" value="P:post-transcriptional regulation of gene expression"/>
    <property type="evidence" value="ECO:0000250"/>
    <property type="project" value="UniProtKB"/>
</dbReference>
<dbReference type="GO" id="GO:0048160">
    <property type="term" value="P:primary follicle stage"/>
    <property type="evidence" value="ECO:0007669"/>
    <property type="project" value="Ensembl"/>
</dbReference>
<dbReference type="GO" id="GO:0000381">
    <property type="term" value="P:regulation of alternative mRNA splicing, via spliceosome"/>
    <property type="evidence" value="ECO:0000318"/>
    <property type="project" value="GO_Central"/>
</dbReference>
<dbReference type="GO" id="GO:0048024">
    <property type="term" value="P:regulation of mRNA splicing, via spliceosome"/>
    <property type="evidence" value="ECO:0000314"/>
    <property type="project" value="UniProtKB"/>
</dbReference>
<dbReference type="GO" id="GO:0007283">
    <property type="term" value="P:spermatogenesis"/>
    <property type="evidence" value="ECO:0007669"/>
    <property type="project" value="Ensembl"/>
</dbReference>
<dbReference type="CDD" id="cd21134">
    <property type="entry name" value="YTH"/>
    <property type="match status" value="1"/>
</dbReference>
<dbReference type="FunFam" id="3.10.590.10:FF:000002">
    <property type="entry name" value="YTH domain-containing protein 1 isoform X1"/>
    <property type="match status" value="1"/>
</dbReference>
<dbReference type="Gene3D" id="3.10.590.10">
    <property type="entry name" value="ph1033 like domains"/>
    <property type="match status" value="1"/>
</dbReference>
<dbReference type="InterPro" id="IPR007275">
    <property type="entry name" value="YTH_domain"/>
</dbReference>
<dbReference type="InterPro" id="IPR045168">
    <property type="entry name" value="YTH_prot"/>
</dbReference>
<dbReference type="PANTHER" id="PTHR12357:SF3">
    <property type="entry name" value="YTH DOMAIN-CONTAINING PROTEIN 1"/>
    <property type="match status" value="1"/>
</dbReference>
<dbReference type="PANTHER" id="PTHR12357">
    <property type="entry name" value="YTH YT521-B HOMOLOGY DOMAIN-CONTAINING"/>
    <property type="match status" value="1"/>
</dbReference>
<dbReference type="Pfam" id="PF04146">
    <property type="entry name" value="YTH"/>
    <property type="match status" value="1"/>
</dbReference>
<dbReference type="PROSITE" id="PS50882">
    <property type="entry name" value="YTH"/>
    <property type="match status" value="1"/>
</dbReference>
<gene>
    <name evidence="20" type="primary">YTHDC1</name>
    <name evidence="15" type="synonym">KIAA1966</name>
    <name evidence="16" type="synonym">YT521</name>
</gene>
<comment type="function">
    <text evidence="1 7 8 9 10 11 12 14">Regulator of alternative splicing that specifically recognizes and binds N6-methyladenosine (m6A)-containing RNAs (PubMed:25242552, PubMed:26318451, PubMed:26876937, PubMed:28984244). M6A is a modification present at internal sites of mRNAs and some non-coding RNAs and plays a role in the efficiency of mRNA splicing, processing and stability (PubMed:25242552, PubMed:26318451). Acts as a key regulator of exon-inclusion or exon-skipping during alternative splicing via interaction with mRNA splicing factors SRSF3 and SRSF10 (PubMed:26876937). Specifically binds m6A-containing mRNAs and promotes recruitment of SRSF3 to its mRNA-binding elements adjacent to m6A sites, leading to exon-inclusion during alternative splicing (PubMed:26876937). In contrast, interaction with SRSF3 prevents interaction with SRSF10, a splicing factor that promotes exon skipping: this prevents SRSF10 from binding to its mRNA-binding sites close to m6A-containing regions, leading to inhibit exon skipping during alternative splicing (PubMed:26876937). May also regulate alternative splice site selection (PubMed:20167602). Also involved in nuclear export of m6A-containing mRNAs via interaction with SRSF3: interaction with SRSF3 facilitates m6A-containing mRNA-binding to both SRSF3 and NXF1, promoting mRNA nuclear export (PubMed:28984244). Involved in S-adenosyl-L-methionine homeostasis by regulating expression of MAT2A transcripts, probably by binding m6A-containing MAT2A mRNAs (By similarity). Also recognizes and binds m6A on other RNA molecules (PubMed:27602518). Involved in random X inactivation mediated by Xist RNA: recognizes and binds m6A-containing Xist and promotes transcription repression activity of Xist (PubMed:27602518). Also recognizes and binds m6A-containing single-stranded DNA (PubMed:32663306). Involved in germline development: required for spermatogonial development in males and oocyte growth and maturation in females, probably via its role in alternative splicing (By similarity).</text>
</comment>
<comment type="subunit">
    <text evidence="1 2 5 6 10 12">Interacts with SRSF1 (By similarity). Interacts with SRSF2 (By similarity). Interacts with SRSF3 (PubMed:26876937, PubMed:28984244). Interacts with SRSF7 (By similarity). Interacts with SRSF10 (PubMed:26876937). Interacts with CPSF6 (By similarity). Interacts with KHDRBS1/SAM68 (By similarity). Interacts with TRA2B (By similarity). Interacts with KHDRBS3 (By similarity). Interacts with EMD (PubMed:12755701). Interacts with RBMX (PubMed:19282290). Interacts with ZCCHC8 (PubMed:28984244).</text>
</comment>
<comment type="interaction">
    <interactant intactId="EBI-2849854">
        <id>Q96MU7</id>
    </interactant>
    <interactant intactId="EBI-359567">
        <id>O15084</id>
        <label>ANKRD28</label>
    </interactant>
    <organismsDiffer>false</organismsDiffer>
    <experiments>3</experiments>
</comment>
<comment type="interaction">
    <interactant intactId="EBI-2849854">
        <id>Q96MU7</id>
    </interactant>
    <interactant intactId="EBI-750020">
        <id>P49760</id>
        <label>CLK2</label>
    </interactant>
    <organismsDiffer>false</organismsDiffer>
    <experiments>7</experiments>
</comment>
<comment type="interaction">
    <interactant intactId="EBI-2849854">
        <id>Q96MU7</id>
    </interactant>
    <interactant intactId="EBI-739789">
        <id>Q92997</id>
        <label>DVL3</label>
    </interactant>
    <organismsDiffer>false</organismsDiffer>
    <experiments>6</experiments>
</comment>
<comment type="interaction">
    <interactant intactId="EBI-2849854">
        <id>Q96MU7</id>
    </interactant>
    <interactant intactId="EBI-304185">
        <id>P61978</id>
        <label>HNRNPK</label>
    </interactant>
    <organismsDiffer>false</organismsDiffer>
    <experiments>4</experiments>
</comment>
<comment type="interaction">
    <interactant intactId="EBI-2849854">
        <id>Q96MU7</id>
    </interactant>
    <interactant intactId="EBI-7060731">
        <id>P61978-2</id>
        <label>HNRNPK</label>
    </interactant>
    <organismsDiffer>false</organismsDiffer>
    <experiments>3</experiments>
</comment>
<comment type="interaction">
    <interactant intactId="EBI-2849854">
        <id>Q96MU7</id>
    </interactant>
    <interactant intactId="EBI-742808">
        <id>Q5VWX1</id>
        <label>KHDRBS2</label>
    </interactant>
    <organismsDiffer>false</organismsDiffer>
    <experiments>6</experiments>
</comment>
<comment type="interaction">
    <interactant intactId="EBI-2849854">
        <id>Q96MU7</id>
    </interactant>
    <interactant intactId="EBI-722504">
        <id>O75525</id>
        <label>KHDRBS3</label>
    </interactant>
    <organismsDiffer>false</organismsDiffer>
    <experiments>6</experiments>
</comment>
<comment type="interaction">
    <interactant intactId="EBI-2849854">
        <id>Q96MU7</id>
    </interactant>
    <interactant intactId="EBI-12012928">
        <id>P60371</id>
        <label>KRTAP10-6</label>
    </interactant>
    <organismsDiffer>false</organismsDiffer>
    <experiments>3</experiments>
</comment>
<comment type="interaction">
    <interactant intactId="EBI-2849854">
        <id>Q96MU7</id>
    </interactant>
    <interactant intactId="EBI-2339674">
        <id>Q5T6S3</id>
        <label>PHF19</label>
    </interactant>
    <organismsDiffer>false</organismsDiffer>
    <experiments>3</experiments>
</comment>
<comment type="interaction">
    <interactant intactId="EBI-2849854">
        <id>Q96MU7</id>
    </interactant>
    <interactant intactId="EBI-79165">
        <id>Q9NRD5</id>
        <label>PICK1</label>
    </interactant>
    <organismsDiffer>false</organismsDiffer>
    <experiments>3</experiments>
</comment>
<comment type="interaction">
    <interactant intactId="EBI-2849854">
        <id>Q96MU7</id>
    </interactant>
    <interactant intactId="EBI-11994018">
        <id>P0DJD3-2</id>
        <label>RBMY1A1</label>
    </interactant>
    <organismsDiffer>false</organismsDiffer>
    <experiments>3</experiments>
</comment>
<comment type="interaction">
    <interactant intactId="EBI-2849854">
        <id>Q96MU7</id>
    </interactant>
    <interactant intactId="EBI-8642021">
        <id>Q15415</id>
        <label>RBMY1J</label>
    </interactant>
    <organismsDiffer>false</organismsDiffer>
    <experiments>6</experiments>
</comment>
<comment type="interaction">
    <interactant intactId="EBI-2849854">
        <id>Q96MU7</id>
    </interactant>
    <interactant intactId="EBI-395959">
        <id>Q15287</id>
        <label>RNPS1</label>
    </interactant>
    <organismsDiffer>false</organismsDiffer>
    <experiments>3</experiments>
</comment>
<comment type="interaction">
    <interactant intactId="EBI-2849854">
        <id>Q96MU7</id>
    </interactant>
    <interactant intactId="EBI-742426">
        <id>Q9H190</id>
        <label>SDCBP2</label>
    </interactant>
    <organismsDiffer>false</organismsDiffer>
    <experiments>7</experiments>
</comment>
<comment type="interaction">
    <interactant intactId="EBI-2849854">
        <id>Q96MU7</id>
    </interactant>
    <interactant intactId="EBI-539478">
        <id>Q96SB4</id>
        <label>SRPK1</label>
    </interactant>
    <organismsDiffer>false</organismsDiffer>
    <experiments>3</experiments>
</comment>
<comment type="interaction">
    <interactant intactId="EBI-2849854">
        <id>Q96MU7</id>
    </interactant>
    <interactant intactId="EBI-593303">
        <id>P78362</id>
        <label>SRPK2</label>
    </interactant>
    <organismsDiffer>false</organismsDiffer>
    <experiments>5</experiments>
</comment>
<comment type="interaction">
    <interactant intactId="EBI-2849854">
        <id>Q96MU7</id>
    </interactant>
    <interactant intactId="EBI-725485">
        <id>P62995</id>
        <label>TRA2B</label>
    </interactant>
    <organismsDiffer>false</organismsDiffer>
    <experiments>4</experiments>
</comment>
<comment type="subcellular location">
    <subcellularLocation>
        <location evidence="7">Nucleus</location>
    </subcellularLocation>
    <subcellularLocation>
        <location evidence="10">Nucleus speckle</location>
    </subcellularLocation>
    <text evidence="2">Localizes to a novel subnuclear structure, the YT bodies.</text>
</comment>
<comment type="alternative products">
    <event type="alternative splicing"/>
    <isoform>
        <id>Q96MU7-1</id>
        <name>1</name>
        <sequence type="displayed"/>
    </isoform>
    <isoform>
        <id>Q96MU7-2</id>
        <name>2</name>
        <sequence type="described" ref="VSP_006818"/>
    </isoform>
</comment>
<comment type="domain">
    <text evidence="7">The YTH domain mediates RNA-binding.</text>
</comment>
<comment type="PTM">
    <text evidence="2">Tyrosine phosphorylated.</text>
</comment>
<comment type="sequence caution" evidence="19">
    <conflict type="erroneous gene model prediction">
        <sequence resource="EMBL-CDS" id="AAY41024"/>
    </conflict>
</comment>
<comment type="sequence caution" evidence="19">
    <conflict type="erroneous initiation">
        <sequence resource="EMBL-CDS" id="BAB71181"/>
    </conflict>
</comment>
<accession>Q96MU7</accession>
<accession>Q4W5Q3</accession>
<accession>Q7Z622</accession>
<accession>Q8TF35</accession>
<protein>
    <recommendedName>
        <fullName evidence="19">YTH domain-containing protein 1</fullName>
    </recommendedName>
    <alternativeName>
        <fullName evidence="16">Splicing factor YT521</fullName>
        <shortName evidence="16">YT521-B</shortName>
    </alternativeName>
</protein>
<keyword id="KW-0002">3D-structure</keyword>
<keyword id="KW-0025">Alternative splicing</keyword>
<keyword id="KW-1017">Isopeptide bond</keyword>
<keyword id="KW-0507">mRNA processing</keyword>
<keyword id="KW-0508">mRNA splicing</keyword>
<keyword id="KW-0539">Nucleus</keyword>
<keyword id="KW-0597">Phosphoprotein</keyword>
<keyword id="KW-1267">Proteomics identification</keyword>
<keyword id="KW-1185">Reference proteome</keyword>
<keyword id="KW-0694">RNA-binding</keyword>
<keyword id="KW-0832">Ubl conjugation</keyword>
<sequence>MAADSREEKDGELNVLDDILTEVPEQDDELYNPESEQDKNEKKGSKRKSDRMESTDTKRQKPSVHSRQLVSKPLSSSVSNNKRIVSTKGKSATEYKNEEYQRSERNKRLDADRKIRLSSSASREPYKNQPEKTCVRKRDPERRAKSPTPDGSERIGLEVDRRASRSSQSSKEEVNSEEYGSDHETGSSGSSDEQGNNTENEEEGVEEDVEEDEEVEEDAEEDEEVDEDGEEEEEEEEEEEEEEEEEEEEYEQDERDQKEEGNDYDTRSEASDSGSESVSFTDGSVRSGSGTDGSDEKKKERKRARGISPIVFDRSGSSASESYAGSEKKHEKLSSSVRAVRKDQTSKLKYVLQDARFFLIKSNNHENVSLAKAKGVWSTLPVNEKKLNLAFRSARSVILIFSVRESGKFQGFARLSSESHHGGSPIHWVLPAGMSAKMLGGVFKIDWICRRELPFTKSAHLTNPWNEHKPVKIGRDGQEIELECGTQLCLLFPPDESIDLYQVIHKMRHKRRMHSQPRSRGRPSRREPVRDVGRRRPEDYDIHNSRKKPRIDYPPEFHQRPGYLKDPRYQEVDRRFSGVRRDVFLNGSYNDYVREFHNMGPPPPWQGMPPYPGMEQPPHHPYYQHHAPPPQAHPPYSGHHPVPHEARYRDKRVHDYDMRVDDFLRRTQAVVSGRRSRPRERDRERERDRPRDNRRDRERDRGRDRERERERLCDRDRDRGERGRYRR</sequence>
<evidence type="ECO:0000250" key="1">
    <source>
        <dbReference type="UniProtKB" id="E9Q5K9"/>
    </source>
</evidence>
<evidence type="ECO:0000250" key="2">
    <source>
        <dbReference type="UniProtKB" id="Q9QY02"/>
    </source>
</evidence>
<evidence type="ECO:0000255" key="3">
    <source>
        <dbReference type="PROSITE-ProRule" id="PRU00225"/>
    </source>
</evidence>
<evidence type="ECO:0000256" key="4">
    <source>
        <dbReference type="SAM" id="MobiDB-lite"/>
    </source>
</evidence>
<evidence type="ECO:0000269" key="5">
    <source>
    </source>
</evidence>
<evidence type="ECO:0000269" key="6">
    <source>
    </source>
</evidence>
<evidence type="ECO:0000269" key="7">
    <source>
    </source>
</evidence>
<evidence type="ECO:0000269" key="8">
    <source>
    </source>
</evidence>
<evidence type="ECO:0000269" key="9">
    <source>
    </source>
</evidence>
<evidence type="ECO:0000269" key="10">
    <source>
    </source>
</evidence>
<evidence type="ECO:0000269" key="11">
    <source>
    </source>
</evidence>
<evidence type="ECO:0000269" key="12">
    <source>
    </source>
</evidence>
<evidence type="ECO:0000269" key="13">
    <source>
    </source>
</evidence>
<evidence type="ECO:0000269" key="14">
    <source>
    </source>
</evidence>
<evidence type="ECO:0000303" key="15">
    <source>
    </source>
</evidence>
<evidence type="ECO:0000303" key="16">
    <source>
    </source>
</evidence>
<evidence type="ECO:0000303" key="17">
    <source>
    </source>
</evidence>
<evidence type="ECO:0000303" key="18">
    <source>
    </source>
</evidence>
<evidence type="ECO:0000305" key="19"/>
<evidence type="ECO:0000312" key="20">
    <source>
        <dbReference type="HGNC" id="HGNC:30626"/>
    </source>
</evidence>
<evidence type="ECO:0007744" key="21">
    <source>
        <dbReference type="PDB" id="6RT4"/>
    </source>
</evidence>
<evidence type="ECO:0007744" key="22">
    <source>
        <dbReference type="PDB" id="6RT5"/>
    </source>
</evidence>
<evidence type="ECO:0007744" key="23">
    <source>
        <dbReference type="PDB" id="6RT6"/>
    </source>
</evidence>
<evidence type="ECO:0007744" key="24">
    <source>
        <dbReference type="PDB" id="6RT7"/>
    </source>
</evidence>
<evidence type="ECO:0007744" key="25">
    <source>
        <dbReference type="PDB" id="6WE8"/>
    </source>
</evidence>
<evidence type="ECO:0007744" key="26">
    <source>
        <dbReference type="PDB" id="6WE9"/>
    </source>
</evidence>
<evidence type="ECO:0007744" key="27">
    <source>
        <dbReference type="PDB" id="6WEA"/>
    </source>
</evidence>
<evidence type="ECO:0007744" key="28">
    <source>
    </source>
</evidence>
<evidence type="ECO:0007744" key="29">
    <source>
    </source>
</evidence>
<evidence type="ECO:0007744" key="30">
    <source>
    </source>
</evidence>
<evidence type="ECO:0007744" key="31">
    <source>
    </source>
</evidence>
<evidence type="ECO:0007744" key="32">
    <source>
    </source>
</evidence>
<evidence type="ECO:0007744" key="33">
    <source>
    </source>
</evidence>
<evidence type="ECO:0007744" key="34">
    <source>
    </source>
</evidence>
<evidence type="ECO:0007744" key="35">
    <source>
    </source>
</evidence>
<evidence type="ECO:0007744" key="36">
    <source>
    </source>
</evidence>
<evidence type="ECO:0007829" key="37">
    <source>
        <dbReference type="PDB" id="2YUD"/>
    </source>
</evidence>
<evidence type="ECO:0007829" key="38">
    <source>
        <dbReference type="PDB" id="6RT5"/>
    </source>
</evidence>
<evidence type="ECO:0007829" key="39">
    <source>
        <dbReference type="PDB" id="6T02"/>
    </source>
</evidence>
<evidence type="ECO:0007829" key="40">
    <source>
        <dbReference type="PDB" id="6YNP"/>
    </source>
</evidence>
<evidence type="ECO:0007829" key="41">
    <source>
        <dbReference type="PDB" id="7PJ7"/>
    </source>
</evidence>
<organism>
    <name type="scientific">Homo sapiens</name>
    <name type="common">Human</name>
    <dbReference type="NCBI Taxonomy" id="9606"/>
    <lineage>
        <taxon>Eukaryota</taxon>
        <taxon>Metazoa</taxon>
        <taxon>Chordata</taxon>
        <taxon>Craniata</taxon>
        <taxon>Vertebrata</taxon>
        <taxon>Euteleostomi</taxon>
        <taxon>Mammalia</taxon>
        <taxon>Eutheria</taxon>
        <taxon>Euarchontoglires</taxon>
        <taxon>Primates</taxon>
        <taxon>Haplorrhini</taxon>
        <taxon>Catarrhini</taxon>
        <taxon>Hominidae</taxon>
        <taxon>Homo</taxon>
    </lineage>
</organism>